<evidence type="ECO:0000255" key="1"/>
<evidence type="ECO:0000269" key="2">
    <source>
    </source>
</evidence>
<evidence type="ECO:0000305" key="3"/>
<proteinExistence type="inferred from homology"/>
<accession>P54425</accession>
<accession>O31438</accession>
<sequence>MANKELKRGLGARHIQMIALGGTIGVGLFMGSASTISWTGPSVLLAYAICGIFIFFIMRAMGEMLYVEPSTGSFATFGHQYIHPMAGYITAWSNWFQWIIVGMSEIIAVGSYTKYWFPDLPAWIPGIVAMVILGAANLISVKSFGEFEFWFAMIKIVTIILMIIAGIGIIFFGFGNGGDAIGLSNLWSHGGFFAGGFSGFFFALSLVIAAYQGVELIGITAGEAKDPQNTLRNAIQSIIWRILIFYIGAIFVIVTVYPWDELNSLGSPFVSTFSKIGITAAAGIINFVVITAAMSGCNSGIFSAGRMLYTLGVNGQAPKFFKKISRNGVPLYGTIAVLIGLAVGVVLNYIAPPKIFVYVYSASVLPGMIPWFIILISHIGFRKAKGAALDKHPFKMPFAPFTNYLTIAFLLMVLVGMWFNDDTRISLIVGVIFLALVVISYYVFGIGKRTQANLTKSEQAAE</sequence>
<organism>
    <name type="scientific">Bacillus subtilis (strain 168)</name>
    <dbReference type="NCBI Taxonomy" id="224308"/>
    <lineage>
        <taxon>Bacteria</taxon>
        <taxon>Bacillati</taxon>
        <taxon>Bacillota</taxon>
        <taxon>Bacilli</taxon>
        <taxon>Bacillales</taxon>
        <taxon>Bacillaceae</taxon>
        <taxon>Bacillus</taxon>
    </lineage>
</organism>
<keyword id="KW-0029">Amino-acid transport</keyword>
<keyword id="KW-1003">Cell membrane</keyword>
<keyword id="KW-0472">Membrane</keyword>
<keyword id="KW-1185">Reference proteome</keyword>
<keyword id="KW-0812">Transmembrane</keyword>
<keyword id="KW-1133">Transmembrane helix</keyword>
<keyword id="KW-0813">Transport</keyword>
<comment type="function">
    <text evidence="2">Probable threonine transporter (PubMed:32743959). Is also active as a minor serine permease (PubMed:32743959).</text>
</comment>
<comment type="subcellular location">
    <subcellularLocation>
        <location evidence="3">Cell membrane</location>
        <topology evidence="1">Multi-pass membrane protein</topology>
    </subcellularLocation>
</comment>
<comment type="disruption phenotype">
    <text evidence="2">Deletion of the gene confers a weak resistance to growth inhibition by serine (PubMed:32743959). The deletion of the three permease-encoding genes aimA (ybeC), ybxG and bcaP results in an unprecedented resistance to serine up to 100 mM (PubMed:32743959).</text>
</comment>
<comment type="similarity">
    <text evidence="3">Belongs to the amino acid-polyamine-organocation (APC) superfamily.</text>
</comment>
<comment type="sequence caution" evidence="3">
    <conflict type="frameshift">
        <sequence resource="EMBL-CDS" id="CAA63442"/>
    </conflict>
</comment>
<dbReference type="EMBL" id="AB006424">
    <property type="protein sequence ID" value="BAA33104.1"/>
    <property type="molecule type" value="Genomic_DNA"/>
</dbReference>
<dbReference type="EMBL" id="AL009126">
    <property type="protein sequence ID" value="CAB12000.1"/>
    <property type="molecule type" value="Genomic_DNA"/>
</dbReference>
<dbReference type="EMBL" id="X92859">
    <property type="protein sequence ID" value="CAA63442.1"/>
    <property type="status" value="ALT_FRAME"/>
    <property type="molecule type" value="Genomic_DNA"/>
</dbReference>
<dbReference type="PIR" id="H69751">
    <property type="entry name" value="H69751"/>
</dbReference>
<dbReference type="RefSeq" id="NP_388088.1">
    <property type="nucleotide sequence ID" value="NC_000964.3"/>
</dbReference>
<dbReference type="RefSeq" id="WP_003246273.1">
    <property type="nucleotide sequence ID" value="NZ_OZ025638.1"/>
</dbReference>
<dbReference type="SMR" id="P54425"/>
<dbReference type="FunCoup" id="P54425">
    <property type="interactions" value="14"/>
</dbReference>
<dbReference type="STRING" id="224308.BSU02060"/>
<dbReference type="PaxDb" id="224308-BSU02060"/>
<dbReference type="EnsemblBacteria" id="CAB12000">
    <property type="protein sequence ID" value="CAB12000"/>
    <property type="gene ID" value="BSU_02060"/>
</dbReference>
<dbReference type="GeneID" id="938470"/>
<dbReference type="KEGG" id="bsu:BSU02060"/>
<dbReference type="PATRIC" id="fig|224308.179.peg.212"/>
<dbReference type="eggNOG" id="COG1113">
    <property type="taxonomic scope" value="Bacteria"/>
</dbReference>
<dbReference type="InParanoid" id="P54425"/>
<dbReference type="OrthoDB" id="9780162at2"/>
<dbReference type="PhylomeDB" id="P54425"/>
<dbReference type="BioCyc" id="BSUB:BSU02060-MONOMER"/>
<dbReference type="Proteomes" id="UP000001570">
    <property type="component" value="Chromosome"/>
</dbReference>
<dbReference type="GO" id="GO:0005886">
    <property type="term" value="C:plasma membrane"/>
    <property type="evidence" value="ECO:0007669"/>
    <property type="project" value="UniProtKB-SubCell"/>
</dbReference>
<dbReference type="GO" id="GO:0006865">
    <property type="term" value="P:amino acid transport"/>
    <property type="evidence" value="ECO:0007669"/>
    <property type="project" value="UniProtKB-KW"/>
</dbReference>
<dbReference type="GO" id="GO:0055085">
    <property type="term" value="P:transmembrane transport"/>
    <property type="evidence" value="ECO:0007669"/>
    <property type="project" value="InterPro"/>
</dbReference>
<dbReference type="FunFam" id="1.20.1740.10:FF:000001">
    <property type="entry name" value="Amino acid permease"/>
    <property type="match status" value="1"/>
</dbReference>
<dbReference type="Gene3D" id="1.20.1740.10">
    <property type="entry name" value="Amino acid/polyamine transporter I"/>
    <property type="match status" value="1"/>
</dbReference>
<dbReference type="InterPro" id="IPR004841">
    <property type="entry name" value="AA-permease/SLC12A_dom"/>
</dbReference>
<dbReference type="InterPro" id="IPR004840">
    <property type="entry name" value="Amino_acid_permease_CS"/>
</dbReference>
<dbReference type="PANTHER" id="PTHR43495">
    <property type="entry name" value="GABA PERMEASE"/>
    <property type="match status" value="1"/>
</dbReference>
<dbReference type="PANTHER" id="PTHR43495:SF6">
    <property type="entry name" value="THREONINE_SERINE TRANSPORTER YBXG-RELATED"/>
    <property type="match status" value="1"/>
</dbReference>
<dbReference type="Pfam" id="PF00324">
    <property type="entry name" value="AA_permease"/>
    <property type="match status" value="1"/>
</dbReference>
<dbReference type="PIRSF" id="PIRSF006060">
    <property type="entry name" value="AA_transporter"/>
    <property type="match status" value="1"/>
</dbReference>
<dbReference type="PROSITE" id="PS00218">
    <property type="entry name" value="AMINO_ACID_PERMEASE_1"/>
    <property type="match status" value="1"/>
</dbReference>
<gene>
    <name type="primary">ybxG</name>
    <name type="synonym">ybdP</name>
    <name type="ordered locus">BSU02060</name>
</gene>
<protein>
    <recommendedName>
        <fullName evidence="3">Probable threonine/serine transporter YbxG</fullName>
    </recommendedName>
</protein>
<feature type="chain" id="PRO_0000054221" description="Probable threonine/serine transporter YbxG">
    <location>
        <begin position="1"/>
        <end position="462"/>
    </location>
</feature>
<feature type="transmembrane region" description="Helical" evidence="1">
    <location>
        <begin position="17"/>
        <end position="37"/>
    </location>
</feature>
<feature type="transmembrane region" description="Helical" evidence="1">
    <location>
        <begin position="38"/>
        <end position="58"/>
    </location>
</feature>
<feature type="transmembrane region" description="Helical" evidence="1">
    <location>
        <begin position="89"/>
        <end position="109"/>
    </location>
</feature>
<feature type="transmembrane region" description="Helical" evidence="1">
    <location>
        <begin position="121"/>
        <end position="141"/>
    </location>
</feature>
<feature type="transmembrane region" description="Helical" evidence="1">
    <location>
        <begin position="154"/>
        <end position="174"/>
    </location>
</feature>
<feature type="transmembrane region" description="Helical" evidence="1">
    <location>
        <begin position="190"/>
        <end position="210"/>
    </location>
</feature>
<feature type="transmembrane region" description="Helical" evidence="1">
    <location>
        <begin position="238"/>
        <end position="258"/>
    </location>
</feature>
<feature type="transmembrane region" description="Helical" evidence="1">
    <location>
        <begin position="276"/>
        <end position="296"/>
    </location>
</feature>
<feature type="transmembrane region" description="Helical" evidence="1">
    <location>
        <begin position="331"/>
        <end position="351"/>
    </location>
</feature>
<feature type="transmembrane region" description="Helical" evidence="1">
    <location>
        <begin position="355"/>
        <end position="375"/>
    </location>
</feature>
<feature type="transmembrane region" description="Helical" evidence="1">
    <location>
        <begin position="398"/>
        <end position="418"/>
    </location>
</feature>
<feature type="transmembrane region" description="Helical" evidence="1">
    <location>
        <begin position="427"/>
        <end position="447"/>
    </location>
</feature>
<reference key="1">
    <citation type="submission" date="1997-07" db="EMBL/GenBank/DDBJ databases">
        <title>Sequence analysis of the 70kb region between 17 and 23 degree of the Bacillus subtilis chromosome.</title>
        <authorList>
            <person name="Haga K."/>
            <person name="Liu H."/>
            <person name="Yasumoto K."/>
            <person name="Takahashi H."/>
            <person name="Yoshikawa H."/>
        </authorList>
    </citation>
    <scope>NUCLEOTIDE SEQUENCE [GENOMIC DNA]</scope>
    <source>
        <strain>168</strain>
    </source>
</reference>
<reference key="2">
    <citation type="journal article" date="1997" name="Nature">
        <title>The complete genome sequence of the Gram-positive bacterium Bacillus subtilis.</title>
        <authorList>
            <person name="Kunst F."/>
            <person name="Ogasawara N."/>
            <person name="Moszer I."/>
            <person name="Albertini A.M."/>
            <person name="Alloni G."/>
            <person name="Azevedo V."/>
            <person name="Bertero M.G."/>
            <person name="Bessieres P."/>
            <person name="Bolotin A."/>
            <person name="Borchert S."/>
            <person name="Borriss R."/>
            <person name="Boursier L."/>
            <person name="Brans A."/>
            <person name="Braun M."/>
            <person name="Brignell S.C."/>
            <person name="Bron S."/>
            <person name="Brouillet S."/>
            <person name="Bruschi C.V."/>
            <person name="Caldwell B."/>
            <person name="Capuano V."/>
            <person name="Carter N.M."/>
            <person name="Choi S.-K."/>
            <person name="Codani J.-J."/>
            <person name="Connerton I.F."/>
            <person name="Cummings N.J."/>
            <person name="Daniel R.A."/>
            <person name="Denizot F."/>
            <person name="Devine K.M."/>
            <person name="Duesterhoeft A."/>
            <person name="Ehrlich S.D."/>
            <person name="Emmerson P.T."/>
            <person name="Entian K.-D."/>
            <person name="Errington J."/>
            <person name="Fabret C."/>
            <person name="Ferrari E."/>
            <person name="Foulger D."/>
            <person name="Fritz C."/>
            <person name="Fujita M."/>
            <person name="Fujita Y."/>
            <person name="Fuma S."/>
            <person name="Galizzi A."/>
            <person name="Galleron N."/>
            <person name="Ghim S.-Y."/>
            <person name="Glaser P."/>
            <person name="Goffeau A."/>
            <person name="Golightly E.J."/>
            <person name="Grandi G."/>
            <person name="Guiseppi G."/>
            <person name="Guy B.J."/>
            <person name="Haga K."/>
            <person name="Haiech J."/>
            <person name="Harwood C.R."/>
            <person name="Henaut A."/>
            <person name="Hilbert H."/>
            <person name="Holsappel S."/>
            <person name="Hosono S."/>
            <person name="Hullo M.-F."/>
            <person name="Itaya M."/>
            <person name="Jones L.-M."/>
            <person name="Joris B."/>
            <person name="Karamata D."/>
            <person name="Kasahara Y."/>
            <person name="Klaerr-Blanchard M."/>
            <person name="Klein C."/>
            <person name="Kobayashi Y."/>
            <person name="Koetter P."/>
            <person name="Koningstein G."/>
            <person name="Krogh S."/>
            <person name="Kumano M."/>
            <person name="Kurita K."/>
            <person name="Lapidus A."/>
            <person name="Lardinois S."/>
            <person name="Lauber J."/>
            <person name="Lazarevic V."/>
            <person name="Lee S.-M."/>
            <person name="Levine A."/>
            <person name="Liu H."/>
            <person name="Masuda S."/>
            <person name="Mauel C."/>
            <person name="Medigue C."/>
            <person name="Medina N."/>
            <person name="Mellado R.P."/>
            <person name="Mizuno M."/>
            <person name="Moestl D."/>
            <person name="Nakai S."/>
            <person name="Noback M."/>
            <person name="Noone D."/>
            <person name="O'Reilly M."/>
            <person name="Ogawa K."/>
            <person name="Ogiwara A."/>
            <person name="Oudega B."/>
            <person name="Park S.-H."/>
            <person name="Parro V."/>
            <person name="Pohl T.M."/>
            <person name="Portetelle D."/>
            <person name="Porwollik S."/>
            <person name="Prescott A.M."/>
            <person name="Presecan E."/>
            <person name="Pujic P."/>
            <person name="Purnelle B."/>
            <person name="Rapoport G."/>
            <person name="Rey M."/>
            <person name="Reynolds S."/>
            <person name="Rieger M."/>
            <person name="Rivolta C."/>
            <person name="Rocha E."/>
            <person name="Roche B."/>
            <person name="Rose M."/>
            <person name="Sadaie Y."/>
            <person name="Sato T."/>
            <person name="Scanlan E."/>
            <person name="Schleich S."/>
            <person name="Schroeter R."/>
            <person name="Scoffone F."/>
            <person name="Sekiguchi J."/>
            <person name="Sekowska A."/>
            <person name="Seror S.J."/>
            <person name="Serror P."/>
            <person name="Shin B.-S."/>
            <person name="Soldo B."/>
            <person name="Sorokin A."/>
            <person name="Tacconi E."/>
            <person name="Takagi T."/>
            <person name="Takahashi H."/>
            <person name="Takemaru K."/>
            <person name="Takeuchi M."/>
            <person name="Tamakoshi A."/>
            <person name="Tanaka T."/>
            <person name="Terpstra P."/>
            <person name="Tognoni A."/>
            <person name="Tosato V."/>
            <person name="Uchiyama S."/>
            <person name="Vandenbol M."/>
            <person name="Vannier F."/>
            <person name="Vassarotti A."/>
            <person name="Viari A."/>
            <person name="Wambutt R."/>
            <person name="Wedler E."/>
            <person name="Wedler H."/>
            <person name="Weitzenegger T."/>
            <person name="Winters P."/>
            <person name="Wipat A."/>
            <person name="Yamamoto H."/>
            <person name="Yamane K."/>
            <person name="Yasumoto K."/>
            <person name="Yata K."/>
            <person name="Yoshida K."/>
            <person name="Yoshikawa H.-F."/>
            <person name="Zumstein E."/>
            <person name="Yoshikawa H."/>
            <person name="Danchin A."/>
        </authorList>
    </citation>
    <scope>NUCLEOTIDE SEQUENCE [LARGE SCALE GENOMIC DNA]</scope>
    <source>
        <strain>168</strain>
    </source>
</reference>
<reference key="3">
    <citation type="journal article" date="1997" name="Gene">
        <title>Characterization of csgA, a new member of the forespore-expressed sigmaG-regulon from Bacillus subtilis.</title>
        <authorList>
            <person name="Shcheptov M."/>
            <person name="Chyu G."/>
            <person name="Bagyan I."/>
            <person name="Cutting S.M."/>
        </authorList>
    </citation>
    <scope>NUCLEOTIDE SEQUENCE [GENOMIC DNA] OF 339-462</scope>
    <source>
        <strain>168 / PY79</strain>
    </source>
</reference>
<reference key="4">
    <citation type="journal article" date="2020" name="Environ. Microbiol.">
        <title>Resistance to serine in Bacillus subtilis: identification of the serine transporter YbeC and of a metabolic network that links serine and threonine metabolism.</title>
        <authorList>
            <person name="Klewing A."/>
            <person name="Koo B.M."/>
            <person name="Krueger L."/>
            <person name="Poehlein A."/>
            <person name="Reuss D."/>
            <person name="Daniel R."/>
            <person name="Gross C.A."/>
            <person name="Stuelke J."/>
        </authorList>
    </citation>
    <scope>FUNCTION</scope>
    <scope>DISRUPTION PHENOTYPE</scope>
</reference>
<name>YBXG_BACSU</name>